<comment type="similarity">
    <text evidence="1">Belongs to the glycosyltransferase 2 family.</text>
</comment>
<organism>
    <name type="scientific">Haemophilus influenzae (strain ATCC 51907 / DSM 11121 / KW20 / Rd)</name>
    <dbReference type="NCBI Taxonomy" id="71421"/>
    <lineage>
        <taxon>Bacteria</taxon>
        <taxon>Pseudomonadati</taxon>
        <taxon>Pseudomonadota</taxon>
        <taxon>Gammaproteobacteria</taxon>
        <taxon>Pasteurellales</taxon>
        <taxon>Pasteurellaceae</taxon>
        <taxon>Haemophilus</taxon>
    </lineage>
</organism>
<gene>
    <name type="ordered locus">HI_1696</name>
</gene>
<dbReference type="EC" id="2.4.-.-"/>
<dbReference type="EMBL" id="M94855">
    <property type="protein sequence ID" value="AAA24982.1"/>
    <property type="molecule type" value="Genomic_DNA"/>
</dbReference>
<dbReference type="EMBL" id="L42023">
    <property type="protein sequence ID" value="AAC23342.1"/>
    <property type="molecule type" value="Genomic_DNA"/>
</dbReference>
<dbReference type="PIR" id="D64175">
    <property type="entry name" value="D64175"/>
</dbReference>
<dbReference type="RefSeq" id="NP_439838.1">
    <property type="nucleotide sequence ID" value="NC_000907.1"/>
</dbReference>
<dbReference type="SMR" id="Q48214"/>
<dbReference type="STRING" id="71421.HI_1696"/>
<dbReference type="CAZy" id="GT2">
    <property type="family name" value="Glycosyltransferase Family 2"/>
</dbReference>
<dbReference type="EnsemblBacteria" id="AAC23342">
    <property type="protein sequence ID" value="AAC23342"/>
    <property type="gene ID" value="HI_1696"/>
</dbReference>
<dbReference type="KEGG" id="hin:HI_1696"/>
<dbReference type="PATRIC" id="fig|71421.8.peg.1775"/>
<dbReference type="eggNOG" id="COG1216">
    <property type="taxonomic scope" value="Bacteria"/>
</dbReference>
<dbReference type="HOGENOM" id="CLU_025996_0_5_6"/>
<dbReference type="OrthoDB" id="9801954at2"/>
<dbReference type="PhylomeDB" id="Q48214"/>
<dbReference type="BioCyc" id="HINF71421:G1GJ1-1712-MONOMER"/>
<dbReference type="Proteomes" id="UP000000579">
    <property type="component" value="Chromosome"/>
</dbReference>
<dbReference type="GO" id="GO:0016757">
    <property type="term" value="F:glycosyltransferase activity"/>
    <property type="evidence" value="ECO:0000318"/>
    <property type="project" value="GO_Central"/>
</dbReference>
<dbReference type="GO" id="GO:0016758">
    <property type="term" value="F:hexosyltransferase activity"/>
    <property type="evidence" value="ECO:0007669"/>
    <property type="project" value="UniProtKB-ARBA"/>
</dbReference>
<dbReference type="GO" id="GO:0009058">
    <property type="term" value="P:biosynthetic process"/>
    <property type="evidence" value="ECO:0007669"/>
    <property type="project" value="UniProtKB-ARBA"/>
</dbReference>
<dbReference type="CDD" id="cd00761">
    <property type="entry name" value="Glyco_tranf_GTA_type"/>
    <property type="match status" value="1"/>
</dbReference>
<dbReference type="Gene3D" id="3.90.550.10">
    <property type="entry name" value="Spore Coat Polysaccharide Biosynthesis Protein SpsA, Chain A"/>
    <property type="match status" value="1"/>
</dbReference>
<dbReference type="InterPro" id="IPR001173">
    <property type="entry name" value="Glyco_trans_2-like"/>
</dbReference>
<dbReference type="InterPro" id="IPR029044">
    <property type="entry name" value="Nucleotide-diphossugar_trans"/>
</dbReference>
<dbReference type="PANTHER" id="PTHR22916">
    <property type="entry name" value="GLYCOSYLTRANSFERASE"/>
    <property type="match status" value="1"/>
</dbReference>
<dbReference type="PANTHER" id="PTHR22916:SF3">
    <property type="entry name" value="UDP-GLCNAC:BETAGAL BETA-1,3-N-ACETYLGLUCOSAMINYLTRANSFERASE-LIKE PROTEIN 1"/>
    <property type="match status" value="1"/>
</dbReference>
<dbReference type="Pfam" id="PF00535">
    <property type="entry name" value="Glycos_transf_2"/>
    <property type="match status" value="1"/>
</dbReference>
<dbReference type="SUPFAM" id="SSF53448">
    <property type="entry name" value="Nucleotide-diphospho-sugar transferases"/>
    <property type="match status" value="1"/>
</dbReference>
<sequence length="294" mass="33646">MLSIIVPSYNRKAEVPALLESLTQQTSSNFEVIIVDDCSKERVVVEQSYSFPVTVIRNETNQGAAESRNVGARTSKGDWLLFLDDDDCFMPEKCEKVLQVIEQNPNINFIYHPAKCEMVNEGFTYVTQPIEPQEISTERILLANKIGGMPMIAIKKEMFLKIGGLSTALRSLEDYDFLLKLLQEPSFTPYKINEPLTYCTFHTKRSSVSTDTTNTQKAIDYIREHYVKTVEQARNFDINASYILAYPHIMNLSRKAAKYYFDIFKKTKSIKQFIITLVILISPKLAINLKRLGK</sequence>
<protein>
    <recommendedName>
        <fullName>Uncharacterized glycosyltransferase HI_1696</fullName>
        <ecNumber>2.4.-.-</ecNumber>
    </recommendedName>
</protein>
<keyword id="KW-0328">Glycosyltransferase</keyword>
<keyword id="KW-1185">Reference proteome</keyword>
<keyword id="KW-0808">Transferase</keyword>
<feature type="chain" id="PRO_0000059234" description="Uncharacterized glycosyltransferase HI_1696">
    <location>
        <begin position="1"/>
        <end position="294"/>
    </location>
</feature>
<feature type="sequence conflict" description="In Ref. 1; AAA24982." evidence="1" ref="1">
    <original>C</original>
    <variation>Y</variation>
    <location>
        <position position="38"/>
    </location>
</feature>
<feature type="sequence conflict" description="In Ref. 1; AAA24982." evidence="1" ref="1">
    <original>S</original>
    <variation>R</variation>
    <location>
        <position position="48"/>
    </location>
</feature>
<feature type="sequence conflict" description="In Ref. 1; AAA24982." evidence="1" ref="1">
    <original>V</original>
    <variation>I</variation>
    <location>
        <position position="70"/>
    </location>
</feature>
<feature type="sequence conflict" description="In Ref. 1; AAA24982." evidence="1" ref="1">
    <original>T</original>
    <variation>A</variation>
    <location>
        <position position="74"/>
    </location>
</feature>
<feature type="sequence conflict" description="In Ref. 1; AAA24982." evidence="1" ref="1">
    <original>C</original>
    <variation>R</variation>
    <location>
        <position position="88"/>
    </location>
</feature>
<feature type="sequence conflict" description="In Ref. 1; AAA24982." evidence="1" ref="1">
    <original>V</original>
    <variation>I</variation>
    <location>
        <position position="97"/>
    </location>
</feature>
<feature type="sequence conflict" description="In Ref. 1; AAA24982." evidence="1" ref="1">
    <original>N</original>
    <variation>D</variation>
    <location>
        <position position="106"/>
    </location>
</feature>
<feature type="sequence conflict" description="In Ref. 1; AAA24982." evidence="1" ref="1">
    <original>I</original>
    <variation>V</variation>
    <location>
        <position position="152"/>
    </location>
</feature>
<feature type="sequence conflict" description="In Ref. 1; AAA24982." evidence="1" ref="1">
    <original>P</original>
    <variation>S</variation>
    <location>
        <position position="185"/>
    </location>
</feature>
<accession>Q48214</accession>
<accession>O05082</accession>
<proteinExistence type="inferred from homology"/>
<name>Y1696_HAEIN</name>
<evidence type="ECO:0000305" key="1"/>
<reference key="1">
    <citation type="submission" date="1992-06" db="EMBL/GenBank/DDBJ databases">
        <title>Characterization and sequence of the lsg locus from Haemophilus influenzae.</title>
        <authorList>
            <person name="McLaughlin R."/>
            <person name="Abu Kwaik Y."/>
            <person name="Young R."/>
            <person name="Spinola S."/>
            <person name="Apicella M."/>
        </authorList>
    </citation>
    <scope>NUCLEOTIDE SEQUENCE [GENOMIC DNA]</scope>
    <source>
        <strain>A2</strain>
    </source>
</reference>
<reference key="2">
    <citation type="journal article" date="1995" name="Science">
        <title>Whole-genome random sequencing and assembly of Haemophilus influenzae Rd.</title>
        <authorList>
            <person name="Fleischmann R.D."/>
            <person name="Adams M.D."/>
            <person name="White O."/>
            <person name="Clayton R.A."/>
            <person name="Kirkness E.F."/>
            <person name="Kerlavage A.R."/>
            <person name="Bult C.J."/>
            <person name="Tomb J.-F."/>
            <person name="Dougherty B.A."/>
            <person name="Merrick J.M."/>
            <person name="McKenney K."/>
            <person name="Sutton G.G."/>
            <person name="FitzHugh W."/>
            <person name="Fields C.A."/>
            <person name="Gocayne J.D."/>
            <person name="Scott J.D."/>
            <person name="Shirley R."/>
            <person name="Liu L.-I."/>
            <person name="Glodek A."/>
            <person name="Kelley J.M."/>
            <person name="Weidman J.F."/>
            <person name="Phillips C.A."/>
            <person name="Spriggs T."/>
            <person name="Hedblom E."/>
            <person name="Cotton M.D."/>
            <person name="Utterback T.R."/>
            <person name="Hanna M.C."/>
            <person name="Nguyen D.T."/>
            <person name="Saudek D.M."/>
            <person name="Brandon R.C."/>
            <person name="Fine L.D."/>
            <person name="Fritchman J.L."/>
            <person name="Fuhrmann J.L."/>
            <person name="Geoghagen N.S.M."/>
            <person name="Gnehm C.L."/>
            <person name="McDonald L.A."/>
            <person name="Small K.V."/>
            <person name="Fraser C.M."/>
            <person name="Smith H.O."/>
            <person name="Venter J.C."/>
        </authorList>
    </citation>
    <scope>NUCLEOTIDE SEQUENCE [LARGE SCALE GENOMIC DNA]</scope>
    <source>
        <strain>ATCC 51907 / DSM 11121 / KW20 / Rd</strain>
    </source>
</reference>